<comment type="function">
    <text evidence="1">Activates expression of the rhaBAD and rhaT operons.</text>
</comment>
<comment type="subunit">
    <text evidence="1">Binds DNA as a dimer.</text>
</comment>
<comment type="subcellular location">
    <subcellularLocation>
        <location evidence="1">Cytoplasm</location>
    </subcellularLocation>
</comment>
<evidence type="ECO:0000255" key="1">
    <source>
        <dbReference type="HAMAP-Rule" id="MF_01534"/>
    </source>
</evidence>
<organism>
    <name type="scientific">Pectobacterium carotovorum subsp. carotovorum (strain PC1)</name>
    <dbReference type="NCBI Taxonomy" id="561230"/>
    <lineage>
        <taxon>Bacteria</taxon>
        <taxon>Pseudomonadati</taxon>
        <taxon>Pseudomonadota</taxon>
        <taxon>Gammaproteobacteria</taxon>
        <taxon>Enterobacterales</taxon>
        <taxon>Pectobacteriaceae</taxon>
        <taxon>Pectobacterium</taxon>
    </lineage>
</organism>
<feature type="chain" id="PRO_1000215405" description="HTH-type transcriptional activator RhaS">
    <location>
        <begin position="1"/>
        <end position="279"/>
    </location>
</feature>
<feature type="domain" description="HTH araC/xylS-type" evidence="1">
    <location>
        <begin position="175"/>
        <end position="273"/>
    </location>
</feature>
<feature type="DNA-binding region" description="H-T-H motif" evidence="1">
    <location>
        <begin position="192"/>
        <end position="213"/>
    </location>
</feature>
<feature type="DNA-binding region" description="H-T-H motif" evidence="1">
    <location>
        <begin position="240"/>
        <end position="263"/>
    </location>
</feature>
<feature type="site" description="Interaction with sigma-70" evidence="1">
    <location>
        <position position="251"/>
    </location>
</feature>
<accession>C6DJR4</accession>
<protein>
    <recommendedName>
        <fullName evidence="1">HTH-type transcriptional activator RhaS</fullName>
    </recommendedName>
    <alternativeName>
        <fullName evidence="1">L-rhamnose operon regulatory protein RhaS</fullName>
    </alternativeName>
</protein>
<dbReference type="EMBL" id="CP001657">
    <property type="protein sequence ID" value="ACT11477.1"/>
    <property type="molecule type" value="Genomic_DNA"/>
</dbReference>
<dbReference type="RefSeq" id="WP_012773133.1">
    <property type="nucleotide sequence ID" value="NC_012917.1"/>
</dbReference>
<dbReference type="SMR" id="C6DJR4"/>
<dbReference type="STRING" id="561230.PC1_0421"/>
<dbReference type="KEGG" id="pct:PC1_0421"/>
<dbReference type="eggNOG" id="COG1917">
    <property type="taxonomic scope" value="Bacteria"/>
</dbReference>
<dbReference type="eggNOG" id="COG2169">
    <property type="taxonomic scope" value="Bacteria"/>
</dbReference>
<dbReference type="HOGENOM" id="CLU_000445_88_5_6"/>
<dbReference type="OrthoDB" id="2547276at2"/>
<dbReference type="Proteomes" id="UP000002736">
    <property type="component" value="Chromosome"/>
</dbReference>
<dbReference type="GO" id="GO:0005737">
    <property type="term" value="C:cytoplasm"/>
    <property type="evidence" value="ECO:0007669"/>
    <property type="project" value="UniProtKB-SubCell"/>
</dbReference>
<dbReference type="GO" id="GO:0003700">
    <property type="term" value="F:DNA-binding transcription factor activity"/>
    <property type="evidence" value="ECO:0007669"/>
    <property type="project" value="UniProtKB-UniRule"/>
</dbReference>
<dbReference type="GO" id="GO:0043565">
    <property type="term" value="F:sequence-specific DNA binding"/>
    <property type="evidence" value="ECO:0007669"/>
    <property type="project" value="InterPro"/>
</dbReference>
<dbReference type="GO" id="GO:0045893">
    <property type="term" value="P:positive regulation of DNA-templated transcription"/>
    <property type="evidence" value="ECO:0007669"/>
    <property type="project" value="UniProtKB-UniRule"/>
</dbReference>
<dbReference type="GO" id="GO:0019299">
    <property type="term" value="P:rhamnose metabolic process"/>
    <property type="evidence" value="ECO:0007669"/>
    <property type="project" value="UniProtKB-UniRule"/>
</dbReference>
<dbReference type="CDD" id="cd06977">
    <property type="entry name" value="cupin_RhaR_RhaS-like_N"/>
    <property type="match status" value="1"/>
</dbReference>
<dbReference type="Gene3D" id="1.10.10.60">
    <property type="entry name" value="Homeodomain-like"/>
    <property type="match status" value="1"/>
</dbReference>
<dbReference type="Gene3D" id="2.60.120.10">
    <property type="entry name" value="Jelly Rolls"/>
    <property type="match status" value="1"/>
</dbReference>
<dbReference type="HAMAP" id="MF_01534">
    <property type="entry name" value="HTH_type_RhaS"/>
    <property type="match status" value="1"/>
</dbReference>
<dbReference type="InterPro" id="IPR003313">
    <property type="entry name" value="AraC-bd"/>
</dbReference>
<dbReference type="InterPro" id="IPR050204">
    <property type="entry name" value="AraC_XylS_family_regulators"/>
</dbReference>
<dbReference type="InterPro" id="IPR009057">
    <property type="entry name" value="Homeodomain-like_sf"/>
</dbReference>
<dbReference type="InterPro" id="IPR037923">
    <property type="entry name" value="HTH-like"/>
</dbReference>
<dbReference type="InterPro" id="IPR018060">
    <property type="entry name" value="HTH_AraC"/>
</dbReference>
<dbReference type="InterPro" id="IPR018062">
    <property type="entry name" value="HTH_AraC-typ_CS"/>
</dbReference>
<dbReference type="InterPro" id="IPR047220">
    <property type="entry name" value="RhaR_RhaS-like_N"/>
</dbReference>
<dbReference type="InterPro" id="IPR014710">
    <property type="entry name" value="RmlC-like_jellyroll"/>
</dbReference>
<dbReference type="InterPro" id="IPR020449">
    <property type="entry name" value="Tscrpt_reg_AraC-type_HTH"/>
</dbReference>
<dbReference type="InterPro" id="IPR023609">
    <property type="entry name" value="Tscrpt_reg_HTH_RhaS"/>
</dbReference>
<dbReference type="NCBIfam" id="NF010028">
    <property type="entry name" value="PRK13503.1"/>
    <property type="match status" value="1"/>
</dbReference>
<dbReference type="PANTHER" id="PTHR46796:SF13">
    <property type="entry name" value="HTH-TYPE TRANSCRIPTIONAL ACTIVATOR RHAS"/>
    <property type="match status" value="1"/>
</dbReference>
<dbReference type="PANTHER" id="PTHR46796">
    <property type="entry name" value="HTH-TYPE TRANSCRIPTIONAL ACTIVATOR RHAS-RELATED"/>
    <property type="match status" value="1"/>
</dbReference>
<dbReference type="Pfam" id="PF02311">
    <property type="entry name" value="AraC_binding"/>
    <property type="match status" value="1"/>
</dbReference>
<dbReference type="Pfam" id="PF12833">
    <property type="entry name" value="HTH_18"/>
    <property type="match status" value="1"/>
</dbReference>
<dbReference type="PRINTS" id="PR00032">
    <property type="entry name" value="HTHARAC"/>
</dbReference>
<dbReference type="SMART" id="SM00342">
    <property type="entry name" value="HTH_ARAC"/>
    <property type="match status" value="1"/>
</dbReference>
<dbReference type="SUPFAM" id="SSF46689">
    <property type="entry name" value="Homeodomain-like"/>
    <property type="match status" value="2"/>
</dbReference>
<dbReference type="SUPFAM" id="SSF51215">
    <property type="entry name" value="Regulatory protein AraC"/>
    <property type="match status" value="1"/>
</dbReference>
<dbReference type="PROSITE" id="PS00041">
    <property type="entry name" value="HTH_ARAC_FAMILY_1"/>
    <property type="match status" value="1"/>
</dbReference>
<dbReference type="PROSITE" id="PS01124">
    <property type="entry name" value="HTH_ARAC_FAMILY_2"/>
    <property type="match status" value="1"/>
</dbReference>
<sequence>MTLLRGDDFFTSRAVTVAVEPRTPQTAFPEHYHDFWEIVLVEQGAGVHVFNDQPYALCSGSVFFVRDNDRHLFEDVEGLCLTNMLYRSPRGFRFLSDIAAFLPYGPNGEWQGQWQVNAAGMQQLKQSLNSLAELAQSDAPEAIAASESLFLHILVQLRQQCFQTQSSGSERQGVQALLGWLQNNYSEEVNWGSLADRFSLPLRTLHRQLKQHTGMTPQRYLNRLRLLEARRRLQQSDDSITTIAHACGFSDSNHFSTQFRKAFSQAPKSLRHQAFSREE</sequence>
<name>RHAS_PECCP</name>
<gene>
    <name evidence="1" type="primary">rhaS</name>
    <name type="ordered locus">PC1_0421</name>
</gene>
<reference key="1">
    <citation type="submission" date="2009-07" db="EMBL/GenBank/DDBJ databases">
        <title>Complete sequence of Pectobacterium carotovorum subsp. carotovorum PC1.</title>
        <authorList>
            <consortium name="US DOE Joint Genome Institute"/>
            <person name="Lucas S."/>
            <person name="Copeland A."/>
            <person name="Lapidus A."/>
            <person name="Glavina del Rio T."/>
            <person name="Tice H."/>
            <person name="Bruce D."/>
            <person name="Goodwin L."/>
            <person name="Pitluck S."/>
            <person name="Munk A.C."/>
            <person name="Brettin T."/>
            <person name="Detter J.C."/>
            <person name="Han C."/>
            <person name="Tapia R."/>
            <person name="Larimer F."/>
            <person name="Land M."/>
            <person name="Hauser L."/>
            <person name="Kyrpides N."/>
            <person name="Mikhailova N."/>
            <person name="Balakrishnan V."/>
            <person name="Glasner J."/>
            <person name="Perna N.T."/>
        </authorList>
    </citation>
    <scope>NUCLEOTIDE SEQUENCE [LARGE SCALE GENOMIC DNA]</scope>
    <source>
        <strain>PC1</strain>
    </source>
</reference>
<keyword id="KW-0010">Activator</keyword>
<keyword id="KW-0963">Cytoplasm</keyword>
<keyword id="KW-0238">DNA-binding</keyword>
<keyword id="KW-0677">Repeat</keyword>
<keyword id="KW-0684">Rhamnose metabolism</keyword>
<keyword id="KW-0804">Transcription</keyword>
<keyword id="KW-0805">Transcription regulation</keyword>
<proteinExistence type="inferred from homology"/>